<dbReference type="EMBL" id="AL646052">
    <property type="protein sequence ID" value="CAD14725.1"/>
    <property type="molecule type" value="Genomic_DNA"/>
</dbReference>
<dbReference type="RefSeq" id="WP_011000975.1">
    <property type="nucleotide sequence ID" value="NC_003295.1"/>
</dbReference>
<dbReference type="SMR" id="Q8Y0M0"/>
<dbReference type="STRING" id="267608.RSc1023"/>
<dbReference type="EnsemblBacteria" id="CAD14725">
    <property type="protein sequence ID" value="CAD14725"/>
    <property type="gene ID" value="RSc1023"/>
</dbReference>
<dbReference type="KEGG" id="rso:RSc1023"/>
<dbReference type="PATRIC" id="fig|267608.8.peg.1040"/>
<dbReference type="eggNOG" id="COG1076">
    <property type="taxonomic scope" value="Bacteria"/>
</dbReference>
<dbReference type="HOGENOM" id="CLU_068529_2_1_4"/>
<dbReference type="Proteomes" id="UP000001436">
    <property type="component" value="Chromosome"/>
</dbReference>
<dbReference type="GO" id="GO:1990230">
    <property type="term" value="C:iron-sulfur cluster transfer complex"/>
    <property type="evidence" value="ECO:0007669"/>
    <property type="project" value="TreeGrafter"/>
</dbReference>
<dbReference type="GO" id="GO:0001671">
    <property type="term" value="F:ATPase activator activity"/>
    <property type="evidence" value="ECO:0007669"/>
    <property type="project" value="InterPro"/>
</dbReference>
<dbReference type="GO" id="GO:0051087">
    <property type="term" value="F:protein-folding chaperone binding"/>
    <property type="evidence" value="ECO:0007669"/>
    <property type="project" value="InterPro"/>
</dbReference>
<dbReference type="GO" id="GO:0044571">
    <property type="term" value="P:[2Fe-2S] cluster assembly"/>
    <property type="evidence" value="ECO:0007669"/>
    <property type="project" value="InterPro"/>
</dbReference>
<dbReference type="GO" id="GO:0051259">
    <property type="term" value="P:protein complex oligomerization"/>
    <property type="evidence" value="ECO:0007669"/>
    <property type="project" value="InterPro"/>
</dbReference>
<dbReference type="GO" id="GO:0006457">
    <property type="term" value="P:protein folding"/>
    <property type="evidence" value="ECO:0007669"/>
    <property type="project" value="UniProtKB-UniRule"/>
</dbReference>
<dbReference type="CDD" id="cd06257">
    <property type="entry name" value="DnaJ"/>
    <property type="match status" value="1"/>
</dbReference>
<dbReference type="Gene3D" id="1.10.287.110">
    <property type="entry name" value="DnaJ domain"/>
    <property type="match status" value="1"/>
</dbReference>
<dbReference type="Gene3D" id="1.20.1280.20">
    <property type="entry name" value="HscB, C-terminal domain"/>
    <property type="match status" value="1"/>
</dbReference>
<dbReference type="HAMAP" id="MF_00682">
    <property type="entry name" value="HscB"/>
    <property type="match status" value="1"/>
</dbReference>
<dbReference type="InterPro" id="IPR001623">
    <property type="entry name" value="DnaJ_domain"/>
</dbReference>
<dbReference type="InterPro" id="IPR004640">
    <property type="entry name" value="HscB"/>
</dbReference>
<dbReference type="InterPro" id="IPR036386">
    <property type="entry name" value="HscB_C_sf"/>
</dbReference>
<dbReference type="InterPro" id="IPR009073">
    <property type="entry name" value="HscB_oligo_C"/>
</dbReference>
<dbReference type="InterPro" id="IPR036869">
    <property type="entry name" value="J_dom_sf"/>
</dbReference>
<dbReference type="NCBIfam" id="TIGR00714">
    <property type="entry name" value="hscB"/>
    <property type="match status" value="1"/>
</dbReference>
<dbReference type="NCBIfam" id="NF002935">
    <property type="entry name" value="PRK03578.1"/>
    <property type="match status" value="1"/>
</dbReference>
<dbReference type="PANTHER" id="PTHR14021">
    <property type="entry name" value="IRON-SULFUR CLUSTER CO-CHAPERONE PROTEIN HSCB"/>
    <property type="match status" value="1"/>
</dbReference>
<dbReference type="PANTHER" id="PTHR14021:SF15">
    <property type="entry name" value="IRON-SULFUR CLUSTER CO-CHAPERONE PROTEIN HSCB"/>
    <property type="match status" value="1"/>
</dbReference>
<dbReference type="Pfam" id="PF00226">
    <property type="entry name" value="DnaJ"/>
    <property type="match status" value="1"/>
</dbReference>
<dbReference type="Pfam" id="PF07743">
    <property type="entry name" value="HSCB_C"/>
    <property type="match status" value="1"/>
</dbReference>
<dbReference type="SMART" id="SM00271">
    <property type="entry name" value="DnaJ"/>
    <property type="match status" value="1"/>
</dbReference>
<dbReference type="SUPFAM" id="SSF46565">
    <property type="entry name" value="Chaperone J-domain"/>
    <property type="match status" value="1"/>
</dbReference>
<dbReference type="SUPFAM" id="SSF47144">
    <property type="entry name" value="HSC20 (HSCB), C-terminal oligomerisation domain"/>
    <property type="match status" value="1"/>
</dbReference>
<dbReference type="PROSITE" id="PS50076">
    <property type="entry name" value="DNAJ_2"/>
    <property type="match status" value="1"/>
</dbReference>
<reference key="1">
    <citation type="journal article" date="2002" name="Nature">
        <title>Genome sequence of the plant pathogen Ralstonia solanacearum.</title>
        <authorList>
            <person name="Salanoubat M."/>
            <person name="Genin S."/>
            <person name="Artiguenave F."/>
            <person name="Gouzy J."/>
            <person name="Mangenot S."/>
            <person name="Arlat M."/>
            <person name="Billault A."/>
            <person name="Brottier P."/>
            <person name="Camus J.-C."/>
            <person name="Cattolico L."/>
            <person name="Chandler M."/>
            <person name="Choisne N."/>
            <person name="Claudel-Renard C."/>
            <person name="Cunnac S."/>
            <person name="Demange N."/>
            <person name="Gaspin C."/>
            <person name="Lavie M."/>
            <person name="Moisan A."/>
            <person name="Robert C."/>
            <person name="Saurin W."/>
            <person name="Schiex T."/>
            <person name="Siguier P."/>
            <person name="Thebault P."/>
            <person name="Whalen M."/>
            <person name="Wincker P."/>
            <person name="Levy M."/>
            <person name="Weissenbach J."/>
            <person name="Boucher C.A."/>
        </authorList>
    </citation>
    <scope>NUCLEOTIDE SEQUENCE [LARGE SCALE GENOMIC DNA]</scope>
    <source>
        <strain>ATCC BAA-1114 / GMI1000</strain>
    </source>
</reference>
<keyword id="KW-0143">Chaperone</keyword>
<keyword id="KW-1185">Reference proteome</keyword>
<sequence>MNSASDTHFSLFGLPEHFEVDDGALNAAYRTVQSRAHPDRHAHASDAERRVAMQWATRANEAYQTLRDPLKRATYLLHLRGVDVQAENNTAMPPAFLMQQLEWRESLADAKAAGDLDALDDLLAMLRGEKRARYQTLAGLLNGGGHDAAAADAVRQLMFIEKIERDTAEAIDRLDD</sequence>
<accession>Q8Y0M0</accession>
<name>HSCB_RALN1</name>
<feature type="chain" id="PRO_0000070982" description="Co-chaperone protein HscB homolog">
    <location>
        <begin position="1"/>
        <end position="176"/>
    </location>
</feature>
<feature type="domain" description="J" evidence="1">
    <location>
        <begin position="7"/>
        <end position="79"/>
    </location>
</feature>
<protein>
    <recommendedName>
        <fullName evidence="1">Co-chaperone protein HscB homolog</fullName>
    </recommendedName>
</protein>
<gene>
    <name evidence="1" type="primary">hscB</name>
    <name type="ordered locus">RSc1023</name>
    <name type="ORF">RS04234</name>
</gene>
<organism>
    <name type="scientific">Ralstonia nicotianae (strain ATCC BAA-1114 / GMI1000)</name>
    <name type="common">Ralstonia solanacearum</name>
    <dbReference type="NCBI Taxonomy" id="267608"/>
    <lineage>
        <taxon>Bacteria</taxon>
        <taxon>Pseudomonadati</taxon>
        <taxon>Pseudomonadota</taxon>
        <taxon>Betaproteobacteria</taxon>
        <taxon>Burkholderiales</taxon>
        <taxon>Burkholderiaceae</taxon>
        <taxon>Ralstonia</taxon>
        <taxon>Ralstonia solanacearum species complex</taxon>
    </lineage>
</organism>
<proteinExistence type="inferred from homology"/>
<comment type="function">
    <text evidence="1">Co-chaperone involved in the maturation of iron-sulfur cluster-containing proteins. Seems to help targeting proteins to be folded toward HscA.</text>
</comment>
<comment type="subunit">
    <text evidence="1">Interacts with HscA and stimulates its ATPase activity.</text>
</comment>
<comment type="similarity">
    <text evidence="1">Belongs to the HscB family.</text>
</comment>
<evidence type="ECO:0000255" key="1">
    <source>
        <dbReference type="HAMAP-Rule" id="MF_00682"/>
    </source>
</evidence>